<evidence type="ECO:0000250" key="1"/>
<evidence type="ECO:0000255" key="2">
    <source>
        <dbReference type="HAMAP-Rule" id="MF_00403"/>
    </source>
</evidence>
<evidence type="ECO:0000305" key="3"/>
<reference key="1">
    <citation type="journal article" date="2002" name="DNA Res.">
        <title>Complete genomic sequence of nitrogen-fixing symbiotic bacterium Bradyrhizobium japonicum USDA110.</title>
        <authorList>
            <person name="Kaneko T."/>
            <person name="Nakamura Y."/>
            <person name="Sato S."/>
            <person name="Minamisawa K."/>
            <person name="Uchiumi T."/>
            <person name="Sasamoto S."/>
            <person name="Watanabe A."/>
            <person name="Idesawa K."/>
            <person name="Iriguchi M."/>
            <person name="Kawashima K."/>
            <person name="Kohara M."/>
            <person name="Matsumoto M."/>
            <person name="Shimpo S."/>
            <person name="Tsuruoka H."/>
            <person name="Wada T."/>
            <person name="Yamada M."/>
            <person name="Tabata S."/>
        </authorList>
    </citation>
    <scope>NUCLEOTIDE SEQUENCE [LARGE SCALE GENOMIC DNA]</scope>
    <source>
        <strain>JCM 10833 / BCRC 13528 / IAM 13628 / NBRC 14792 / USDA 110</strain>
    </source>
</reference>
<name>RS12_BRADU</name>
<organism>
    <name type="scientific">Bradyrhizobium diazoefficiens (strain JCM 10833 / BCRC 13528 / IAM 13628 / NBRC 14792 / USDA 110)</name>
    <dbReference type="NCBI Taxonomy" id="224911"/>
    <lineage>
        <taxon>Bacteria</taxon>
        <taxon>Pseudomonadati</taxon>
        <taxon>Pseudomonadota</taxon>
        <taxon>Alphaproteobacteria</taxon>
        <taxon>Hyphomicrobiales</taxon>
        <taxon>Nitrobacteraceae</taxon>
        <taxon>Bradyrhizobium</taxon>
    </lineage>
</organism>
<keyword id="KW-0488">Methylation</keyword>
<keyword id="KW-1185">Reference proteome</keyword>
<keyword id="KW-0687">Ribonucleoprotein</keyword>
<keyword id="KW-0689">Ribosomal protein</keyword>
<keyword id="KW-0694">RNA-binding</keyword>
<keyword id="KW-0699">rRNA-binding</keyword>
<keyword id="KW-0820">tRNA-binding</keyword>
<sequence>MPTINQLIAQPREVQKSRKKVPALQQSPQKRGVCTRVYTTTPKKPNSALRKVAKVRLTNGFEVIGYIPGEGHNLQEHSVVMIRGGRVKDLPGVRYHILRGVLDTQGVKNRKQRRSKYGAKRPK</sequence>
<accession>Q89J79</accession>
<comment type="function">
    <text evidence="2">With S4 and S5 plays an important role in translational accuracy.</text>
</comment>
<comment type="function">
    <text evidence="2">Interacts with and stabilizes bases of the 16S rRNA that are involved in tRNA selection in the A site and with the mRNA backbone. Located at the interface of the 30S and 50S subunits, it traverses the body of the 30S subunit contacting proteins on the other side and probably holding the rRNA structure together. The combined cluster of proteins S8, S12 and S17 appears to hold together the shoulder and platform of the 30S subunit.</text>
</comment>
<comment type="subunit">
    <text evidence="2">Part of the 30S ribosomal subunit. Contacts proteins S8 and S17. May interact with IF1 in the 30S initiation complex.</text>
</comment>
<comment type="similarity">
    <text evidence="2">Belongs to the universal ribosomal protein uS12 family.</text>
</comment>
<feature type="chain" id="PRO_0000146189" description="Small ribosomal subunit protein uS12">
    <location>
        <begin position="1"/>
        <end position="123"/>
    </location>
</feature>
<feature type="modified residue" description="3-methylthioaspartic acid" evidence="1">
    <location>
        <position position="89"/>
    </location>
</feature>
<dbReference type="EMBL" id="BA000040">
    <property type="protein sequence ID" value="BAC50670.1"/>
    <property type="molecule type" value="Genomic_DNA"/>
</dbReference>
<dbReference type="RefSeq" id="NP_772045.1">
    <property type="nucleotide sequence ID" value="NC_004463.1"/>
</dbReference>
<dbReference type="RefSeq" id="WP_007603006.1">
    <property type="nucleotide sequence ID" value="NZ_CP011360.1"/>
</dbReference>
<dbReference type="SMR" id="Q89J79"/>
<dbReference type="FunCoup" id="Q89J79">
    <property type="interactions" value="706"/>
</dbReference>
<dbReference type="STRING" id="224911.AAV28_24435"/>
<dbReference type="EnsemblBacteria" id="BAC50670">
    <property type="protein sequence ID" value="BAC50670"/>
    <property type="gene ID" value="BAC50670"/>
</dbReference>
<dbReference type="GeneID" id="93215329"/>
<dbReference type="KEGG" id="bja:bll5405"/>
<dbReference type="PATRIC" id="fig|224911.44.peg.5304"/>
<dbReference type="eggNOG" id="COG0048">
    <property type="taxonomic scope" value="Bacteria"/>
</dbReference>
<dbReference type="HOGENOM" id="CLU_104295_1_2_5"/>
<dbReference type="InParanoid" id="Q89J79"/>
<dbReference type="OrthoDB" id="9802366at2"/>
<dbReference type="PhylomeDB" id="Q89J79"/>
<dbReference type="PRO" id="PR:Q89J79"/>
<dbReference type="Proteomes" id="UP000002526">
    <property type="component" value="Chromosome"/>
</dbReference>
<dbReference type="GO" id="GO:0005840">
    <property type="term" value="C:ribosome"/>
    <property type="evidence" value="ECO:0000318"/>
    <property type="project" value="GO_Central"/>
</dbReference>
<dbReference type="GO" id="GO:0015935">
    <property type="term" value="C:small ribosomal subunit"/>
    <property type="evidence" value="ECO:0007669"/>
    <property type="project" value="InterPro"/>
</dbReference>
<dbReference type="GO" id="GO:0019843">
    <property type="term" value="F:rRNA binding"/>
    <property type="evidence" value="ECO:0007669"/>
    <property type="project" value="UniProtKB-UniRule"/>
</dbReference>
<dbReference type="GO" id="GO:0003735">
    <property type="term" value="F:structural constituent of ribosome"/>
    <property type="evidence" value="ECO:0000318"/>
    <property type="project" value="GO_Central"/>
</dbReference>
<dbReference type="GO" id="GO:0000049">
    <property type="term" value="F:tRNA binding"/>
    <property type="evidence" value="ECO:0007669"/>
    <property type="project" value="UniProtKB-UniRule"/>
</dbReference>
<dbReference type="GO" id="GO:0006412">
    <property type="term" value="P:translation"/>
    <property type="evidence" value="ECO:0000318"/>
    <property type="project" value="GO_Central"/>
</dbReference>
<dbReference type="CDD" id="cd03368">
    <property type="entry name" value="Ribosomal_S12"/>
    <property type="match status" value="1"/>
</dbReference>
<dbReference type="FunFam" id="2.40.50.140:FF:000001">
    <property type="entry name" value="30S ribosomal protein S12"/>
    <property type="match status" value="1"/>
</dbReference>
<dbReference type="Gene3D" id="2.40.50.140">
    <property type="entry name" value="Nucleic acid-binding proteins"/>
    <property type="match status" value="1"/>
</dbReference>
<dbReference type="HAMAP" id="MF_00403_B">
    <property type="entry name" value="Ribosomal_uS12_B"/>
    <property type="match status" value="1"/>
</dbReference>
<dbReference type="InterPro" id="IPR012340">
    <property type="entry name" value="NA-bd_OB-fold"/>
</dbReference>
<dbReference type="InterPro" id="IPR006032">
    <property type="entry name" value="Ribosomal_uS12"/>
</dbReference>
<dbReference type="InterPro" id="IPR005679">
    <property type="entry name" value="Ribosomal_uS12_bac"/>
</dbReference>
<dbReference type="NCBIfam" id="TIGR00981">
    <property type="entry name" value="rpsL_bact"/>
    <property type="match status" value="1"/>
</dbReference>
<dbReference type="PANTHER" id="PTHR11652">
    <property type="entry name" value="30S RIBOSOMAL PROTEIN S12 FAMILY MEMBER"/>
    <property type="match status" value="1"/>
</dbReference>
<dbReference type="Pfam" id="PF00164">
    <property type="entry name" value="Ribosom_S12_S23"/>
    <property type="match status" value="1"/>
</dbReference>
<dbReference type="PIRSF" id="PIRSF002133">
    <property type="entry name" value="Ribosomal_S12/S23"/>
    <property type="match status" value="1"/>
</dbReference>
<dbReference type="PRINTS" id="PR01034">
    <property type="entry name" value="RIBOSOMALS12"/>
</dbReference>
<dbReference type="SUPFAM" id="SSF50249">
    <property type="entry name" value="Nucleic acid-binding proteins"/>
    <property type="match status" value="1"/>
</dbReference>
<dbReference type="PROSITE" id="PS00055">
    <property type="entry name" value="RIBOSOMAL_S12"/>
    <property type="match status" value="1"/>
</dbReference>
<gene>
    <name evidence="2" type="primary">rpsL</name>
    <name type="ordered locus">bll5405</name>
</gene>
<protein>
    <recommendedName>
        <fullName evidence="2">Small ribosomal subunit protein uS12</fullName>
    </recommendedName>
    <alternativeName>
        <fullName evidence="3">30S ribosomal protein S12</fullName>
    </alternativeName>
</protein>
<proteinExistence type="inferred from homology"/>